<dbReference type="EMBL" id="X53676">
    <property type="protein sequence ID" value="CAA40151.1"/>
    <property type="molecule type" value="Genomic_DNA"/>
</dbReference>
<dbReference type="PIR" id="S13937">
    <property type="entry name" value="O4PSZ"/>
</dbReference>
<dbReference type="RefSeq" id="WP_003279943.1">
    <property type="nucleotide sequence ID" value="NZ_POUM01000011.1"/>
</dbReference>
<dbReference type="GO" id="GO:0005886">
    <property type="term" value="C:plasma membrane"/>
    <property type="evidence" value="ECO:0007669"/>
    <property type="project" value="UniProtKB-SubCell"/>
</dbReference>
<dbReference type="GO" id="GO:0009055">
    <property type="term" value="F:electron transfer activity"/>
    <property type="evidence" value="ECO:0007669"/>
    <property type="project" value="TreeGrafter"/>
</dbReference>
<dbReference type="GO" id="GO:0020037">
    <property type="term" value="F:heme binding"/>
    <property type="evidence" value="ECO:0007669"/>
    <property type="project" value="InterPro"/>
</dbReference>
<dbReference type="GO" id="GO:0046872">
    <property type="term" value="F:metal ion binding"/>
    <property type="evidence" value="ECO:0007669"/>
    <property type="project" value="UniProtKB-KW"/>
</dbReference>
<dbReference type="GO" id="GO:0009061">
    <property type="term" value="P:anaerobic respiration"/>
    <property type="evidence" value="ECO:0007669"/>
    <property type="project" value="TreeGrafter"/>
</dbReference>
<dbReference type="GO" id="GO:0019333">
    <property type="term" value="P:denitrification pathway"/>
    <property type="evidence" value="ECO:0007669"/>
    <property type="project" value="InterPro"/>
</dbReference>
<dbReference type="FunFam" id="1.10.3820.10:FF:000001">
    <property type="entry name" value="Cytochrome c-type protein"/>
    <property type="match status" value="1"/>
</dbReference>
<dbReference type="Gene3D" id="1.10.3820.10">
    <property type="entry name" value="Di-heme elbow motif domain"/>
    <property type="match status" value="1"/>
</dbReference>
<dbReference type="InterPro" id="IPR051174">
    <property type="entry name" value="Cytochrome_c-type_ET"/>
</dbReference>
<dbReference type="InterPro" id="IPR036280">
    <property type="entry name" value="Multihaem_cyt_sf"/>
</dbReference>
<dbReference type="InterPro" id="IPR024717">
    <property type="entry name" value="NapC/NirT/NrfH"/>
</dbReference>
<dbReference type="InterPro" id="IPR005126">
    <property type="entry name" value="NapC/NirT_cyt_c_N"/>
</dbReference>
<dbReference type="InterPro" id="IPR038266">
    <property type="entry name" value="NapC/NirT_cytc_sf"/>
</dbReference>
<dbReference type="InterPro" id="IPR011885">
    <property type="entry name" value="NO3Rdtase_cyt_c_NapC/NirT"/>
</dbReference>
<dbReference type="NCBIfam" id="TIGR02161">
    <property type="entry name" value="napC_nirT"/>
    <property type="match status" value="1"/>
</dbReference>
<dbReference type="PANTHER" id="PTHR30333">
    <property type="entry name" value="CYTOCHROME C-TYPE PROTEIN"/>
    <property type="match status" value="1"/>
</dbReference>
<dbReference type="PANTHER" id="PTHR30333:SF1">
    <property type="entry name" value="CYTOCHROME C-TYPE PROTEIN NAPC"/>
    <property type="match status" value="1"/>
</dbReference>
<dbReference type="Pfam" id="PF03264">
    <property type="entry name" value="Cytochrom_NNT"/>
    <property type="match status" value="1"/>
</dbReference>
<dbReference type="PIRSF" id="PIRSF000013">
    <property type="entry name" value="4_hem_cytochrm_NapC"/>
    <property type="match status" value="1"/>
</dbReference>
<dbReference type="SUPFAM" id="SSF48695">
    <property type="entry name" value="Multiheme cytochromes"/>
    <property type="match status" value="1"/>
</dbReference>
<dbReference type="PROSITE" id="PS51008">
    <property type="entry name" value="MULTIHEME_CYTC"/>
    <property type="match status" value="1"/>
</dbReference>
<accession>P24038</accession>
<protein>
    <recommendedName>
        <fullName>Denitrification system component NirT</fullName>
    </recommendedName>
</protein>
<keyword id="KW-1003">Cell membrane</keyword>
<keyword id="KW-0249">Electron transport</keyword>
<keyword id="KW-0349">Heme</keyword>
<keyword id="KW-0408">Iron</keyword>
<keyword id="KW-0472">Membrane</keyword>
<keyword id="KW-0479">Metal-binding</keyword>
<keyword id="KW-0812">Transmembrane</keyword>
<keyword id="KW-1133">Transmembrane helix</keyword>
<keyword id="KW-0813">Transport</keyword>
<gene>
    <name type="primary">nirT</name>
</gene>
<feature type="chain" id="PRO_0000108438" description="Denitrification system component NirT">
    <location>
        <begin position="1"/>
        <end position="201"/>
    </location>
</feature>
<feature type="topological domain" description="Cytoplasmic" evidence="2">
    <location>
        <begin position="1"/>
        <end position="24"/>
    </location>
</feature>
<feature type="transmembrane region" description="Helical" evidence="2">
    <location>
        <begin position="25"/>
        <end position="45"/>
    </location>
</feature>
<feature type="topological domain" description="Periplasmic" evidence="2">
    <location>
        <begin position="46"/>
        <end position="201"/>
    </location>
</feature>
<feature type="binding site" description="covalent" evidence="1">
    <location>
        <position position="58"/>
    </location>
    <ligand>
        <name>heme</name>
        <dbReference type="ChEBI" id="CHEBI:30413"/>
        <label>1</label>
    </ligand>
</feature>
<feature type="binding site" description="covalent" evidence="1">
    <location>
        <position position="61"/>
    </location>
    <ligand>
        <name>heme</name>
        <dbReference type="ChEBI" id="CHEBI:30413"/>
        <label>1</label>
    </ligand>
</feature>
<feature type="binding site" description="axial binding residue" evidence="1">
    <location>
        <position position="64"/>
    </location>
    <ligand>
        <name>heme</name>
        <dbReference type="ChEBI" id="CHEBI:30413"/>
        <label>1</label>
    </ligand>
    <ligandPart>
        <name>Fe</name>
        <dbReference type="ChEBI" id="CHEBI:18248"/>
    </ligandPart>
</feature>
<feature type="binding site" description="covalent" evidence="1">
    <location>
        <position position="88"/>
    </location>
    <ligand>
        <name>heme</name>
        <dbReference type="ChEBI" id="CHEBI:30413"/>
        <label>2</label>
    </ligand>
</feature>
<feature type="binding site" description="covalent" evidence="1">
    <location>
        <position position="91"/>
    </location>
    <ligand>
        <name>heme</name>
        <dbReference type="ChEBI" id="CHEBI:30413"/>
        <label>2</label>
    </ligand>
</feature>
<feature type="binding site" description="axial binding residue" evidence="1">
    <location>
        <position position="92"/>
    </location>
    <ligand>
        <name>heme</name>
        <dbReference type="ChEBI" id="CHEBI:30413"/>
        <label>2</label>
    </ligand>
    <ligandPart>
        <name>Fe</name>
        <dbReference type="ChEBI" id="CHEBI:18248"/>
    </ligandPart>
</feature>
<feature type="binding site" evidence="1">
    <location>
        <position position="104"/>
    </location>
    <ligand>
        <name>substrate</name>
    </ligand>
</feature>
<feature type="binding site" description="axial binding residue" evidence="1">
    <location>
        <position position="110"/>
    </location>
    <ligand>
        <name>heme</name>
        <dbReference type="ChEBI" id="CHEBI:30413"/>
        <label>1</label>
    </ligand>
    <ligandPart>
        <name>Fe</name>
        <dbReference type="ChEBI" id="CHEBI:18248"/>
    </ligandPart>
</feature>
<feature type="binding site" description="covalent" evidence="1">
    <location>
        <position position="148"/>
    </location>
    <ligand>
        <name>heme</name>
        <dbReference type="ChEBI" id="CHEBI:30413"/>
        <label>3</label>
    </ligand>
</feature>
<feature type="binding site" description="covalent" evidence="1">
    <location>
        <position position="151"/>
    </location>
    <ligand>
        <name>heme</name>
        <dbReference type="ChEBI" id="CHEBI:30413"/>
        <label>3</label>
    </ligand>
</feature>
<feature type="binding site" description="axial binding residue" evidence="1">
    <location>
        <position position="152"/>
    </location>
    <ligand>
        <name>heme</name>
        <dbReference type="ChEBI" id="CHEBI:30413"/>
        <label>3</label>
    </ligand>
    <ligandPart>
        <name>Fe</name>
        <dbReference type="ChEBI" id="CHEBI:18248"/>
    </ligandPart>
</feature>
<feature type="binding site" description="covalent" evidence="1">
    <location>
        <position position="180"/>
    </location>
    <ligand>
        <name>heme</name>
        <dbReference type="ChEBI" id="CHEBI:30413"/>
        <label>4</label>
    </ligand>
</feature>
<feature type="binding site" description="covalent" evidence="1">
    <location>
        <position position="183"/>
    </location>
    <ligand>
        <name>heme</name>
        <dbReference type="ChEBI" id="CHEBI:30413"/>
        <label>4</label>
    </ligand>
</feature>
<feature type="binding site" description="axial binding residue" evidence="1">
    <location>
        <position position="184"/>
    </location>
    <ligand>
        <name>heme</name>
        <dbReference type="ChEBI" id="CHEBI:30413"/>
        <label>4</label>
    </ligand>
    <ligandPart>
        <name>Fe</name>
        <dbReference type="ChEBI" id="CHEBI:18248"/>
    </ligandPart>
</feature>
<feature type="binding site" description="axial binding residue" evidence="1">
    <location>
        <position position="189"/>
    </location>
    <ligand>
        <name>heme</name>
        <dbReference type="ChEBI" id="CHEBI:30413"/>
        <label>2</label>
    </ligand>
    <ligandPart>
        <name>Fe</name>
        <dbReference type="ChEBI" id="CHEBI:18248"/>
    </ligandPart>
</feature>
<feature type="site" description="Interaction with NrfA" evidence="1">
    <location>
        <position position="175"/>
    </location>
</feature>
<proteinExistence type="evidence at transcript level"/>
<reference key="1">
    <citation type="journal article" date="1991" name="FEBS Lett.">
        <title>The nirSTBM region coding for cytochrome cd1-dependent nitrite respiration of Pseudomonas stutzeri consists of a cluster of mono-, di-, and tetraheme proteins.</title>
        <authorList>
            <person name="Juengst A."/>
            <person name="Wakabayashi S."/>
            <person name="Matsubara H."/>
            <person name="Zumft W.G."/>
        </authorList>
    </citation>
    <scope>NUCLEOTIDE SEQUENCE [GENOMIC DNA]</scope>
    <source>
        <strain>ATCC 14405 / JCM 20778 / CIP 107696 / IAM 12931 / LMG 2243 / NCIMB 568 / Baumann 218 / ZoBell 632</strain>
    </source>
</reference>
<comment type="subcellular location">
    <subcellularLocation>
        <location evidence="3">Cell membrane</location>
        <topology evidence="3">Single-pass membrane protein</topology>
    </subcellularLocation>
</comment>
<comment type="induction">
    <text>By anaerobic conditions.</text>
</comment>
<comment type="PTM">
    <text>Binds 4 heme groups per subunit.</text>
</comment>
<comment type="similarity">
    <text evidence="3">Belongs to the NapC/NirT/NrfH family.</text>
</comment>
<organism>
    <name type="scientific">Stutzerimonas stutzeri</name>
    <name type="common">Pseudomonas stutzeri</name>
    <dbReference type="NCBI Taxonomy" id="316"/>
    <lineage>
        <taxon>Bacteria</taxon>
        <taxon>Pseudomonadati</taxon>
        <taxon>Pseudomonadota</taxon>
        <taxon>Gammaproteobacteria</taxon>
        <taxon>Pseudomonadales</taxon>
        <taxon>Pseudomonadaceae</taxon>
        <taxon>Stutzerimonas</taxon>
    </lineage>
</organism>
<sequence length="201" mass="22825">MTDKDGNKQQKGGILALLRRPSTRYSLGGILIVGIVAGIVFWGGFNTALEATNTETFCISCHEMGDNVYPEYKETIHYANRTGVRATCPDCHVPRDWTHKMVRKVEASKELWGKIVGTIDTAEKFEAKRLTLARREWARMRASDSRECRNCHSLESMSSDMQKQRARKQHEMAREDNLTCIACHKGIAHHLPEGMTEEDED</sequence>
<name>NIRT_STUST</name>
<evidence type="ECO:0000250" key="1">
    <source>
        <dbReference type="UniProtKB" id="Q72EF4"/>
    </source>
</evidence>
<evidence type="ECO:0000255" key="2"/>
<evidence type="ECO:0000305" key="3"/>